<gene>
    <name evidence="1" type="primary">murB</name>
    <name type="ordered locus">MSMEG_0928</name>
    <name type="ordered locus">MSMEI_0906</name>
</gene>
<dbReference type="EC" id="1.3.1.98" evidence="1"/>
<dbReference type="EMBL" id="CP000480">
    <property type="protein sequence ID" value="ABK75282.1"/>
    <property type="molecule type" value="Genomic_DNA"/>
</dbReference>
<dbReference type="EMBL" id="CP001663">
    <property type="protein sequence ID" value="AFP37386.1"/>
    <property type="molecule type" value="Genomic_DNA"/>
</dbReference>
<dbReference type="RefSeq" id="WP_003892354.1">
    <property type="nucleotide sequence ID" value="NZ_SIJM01000010.1"/>
</dbReference>
<dbReference type="RefSeq" id="YP_885331.1">
    <property type="nucleotide sequence ID" value="NC_008596.1"/>
</dbReference>
<dbReference type="SMR" id="A0QQZ3"/>
<dbReference type="STRING" id="246196.MSMEG_0928"/>
<dbReference type="PaxDb" id="246196-MSMEI_0906"/>
<dbReference type="KEGG" id="msb:LJ00_04610"/>
<dbReference type="KEGG" id="msg:MSMEI_0906"/>
<dbReference type="KEGG" id="msm:MSMEG_0928"/>
<dbReference type="PATRIC" id="fig|246196.19.peg.918"/>
<dbReference type="eggNOG" id="COG0812">
    <property type="taxonomic scope" value="Bacteria"/>
</dbReference>
<dbReference type="OrthoDB" id="9804753at2"/>
<dbReference type="UniPathway" id="UPA00219"/>
<dbReference type="Proteomes" id="UP000000757">
    <property type="component" value="Chromosome"/>
</dbReference>
<dbReference type="Proteomes" id="UP000006158">
    <property type="component" value="Chromosome"/>
</dbReference>
<dbReference type="GO" id="GO:0005829">
    <property type="term" value="C:cytosol"/>
    <property type="evidence" value="ECO:0007669"/>
    <property type="project" value="TreeGrafter"/>
</dbReference>
<dbReference type="GO" id="GO:0071949">
    <property type="term" value="F:FAD binding"/>
    <property type="evidence" value="ECO:0007669"/>
    <property type="project" value="InterPro"/>
</dbReference>
<dbReference type="GO" id="GO:0008762">
    <property type="term" value="F:UDP-N-acetylmuramate dehydrogenase activity"/>
    <property type="evidence" value="ECO:0007669"/>
    <property type="project" value="UniProtKB-UniRule"/>
</dbReference>
<dbReference type="GO" id="GO:0051301">
    <property type="term" value="P:cell division"/>
    <property type="evidence" value="ECO:0007669"/>
    <property type="project" value="UniProtKB-KW"/>
</dbReference>
<dbReference type="GO" id="GO:0071555">
    <property type="term" value="P:cell wall organization"/>
    <property type="evidence" value="ECO:0007669"/>
    <property type="project" value="UniProtKB-KW"/>
</dbReference>
<dbReference type="GO" id="GO:0009252">
    <property type="term" value="P:peptidoglycan biosynthetic process"/>
    <property type="evidence" value="ECO:0007669"/>
    <property type="project" value="UniProtKB-UniRule"/>
</dbReference>
<dbReference type="GO" id="GO:0008360">
    <property type="term" value="P:regulation of cell shape"/>
    <property type="evidence" value="ECO:0007669"/>
    <property type="project" value="UniProtKB-KW"/>
</dbReference>
<dbReference type="Gene3D" id="3.30.465.10">
    <property type="match status" value="1"/>
</dbReference>
<dbReference type="Gene3D" id="3.90.78.10">
    <property type="entry name" value="UDP-N-acetylenolpyruvoylglucosamine reductase, C-terminal domain"/>
    <property type="match status" value="1"/>
</dbReference>
<dbReference type="Gene3D" id="3.30.43.10">
    <property type="entry name" value="Uridine Diphospho-n-acetylenolpyruvylglucosamine Reductase, domain 2"/>
    <property type="match status" value="1"/>
</dbReference>
<dbReference type="HAMAP" id="MF_00037">
    <property type="entry name" value="MurB"/>
    <property type="match status" value="1"/>
</dbReference>
<dbReference type="InterPro" id="IPR016166">
    <property type="entry name" value="FAD-bd_PCMH"/>
</dbReference>
<dbReference type="InterPro" id="IPR036318">
    <property type="entry name" value="FAD-bd_PCMH-like_sf"/>
</dbReference>
<dbReference type="InterPro" id="IPR016167">
    <property type="entry name" value="FAD-bd_PCMH_sub1"/>
</dbReference>
<dbReference type="InterPro" id="IPR016169">
    <property type="entry name" value="FAD-bd_PCMH_sub2"/>
</dbReference>
<dbReference type="InterPro" id="IPR003170">
    <property type="entry name" value="MurB"/>
</dbReference>
<dbReference type="InterPro" id="IPR011601">
    <property type="entry name" value="MurB_C"/>
</dbReference>
<dbReference type="InterPro" id="IPR036635">
    <property type="entry name" value="MurB_C_sf"/>
</dbReference>
<dbReference type="InterPro" id="IPR006094">
    <property type="entry name" value="Oxid_FAD_bind_N"/>
</dbReference>
<dbReference type="NCBIfam" id="TIGR00179">
    <property type="entry name" value="murB"/>
    <property type="match status" value="1"/>
</dbReference>
<dbReference type="NCBIfam" id="NF010478">
    <property type="entry name" value="PRK13903.1"/>
    <property type="match status" value="1"/>
</dbReference>
<dbReference type="PANTHER" id="PTHR21071">
    <property type="entry name" value="UDP-N-ACETYLENOLPYRUVOYLGLUCOSAMINE REDUCTASE"/>
    <property type="match status" value="1"/>
</dbReference>
<dbReference type="PANTHER" id="PTHR21071:SF4">
    <property type="entry name" value="UDP-N-ACETYLENOLPYRUVOYLGLUCOSAMINE REDUCTASE"/>
    <property type="match status" value="1"/>
</dbReference>
<dbReference type="Pfam" id="PF01565">
    <property type="entry name" value="FAD_binding_4"/>
    <property type="match status" value="1"/>
</dbReference>
<dbReference type="Pfam" id="PF02873">
    <property type="entry name" value="MurB_C"/>
    <property type="match status" value="1"/>
</dbReference>
<dbReference type="SUPFAM" id="SSF56176">
    <property type="entry name" value="FAD-binding/transporter-associated domain-like"/>
    <property type="match status" value="1"/>
</dbReference>
<dbReference type="SUPFAM" id="SSF56194">
    <property type="entry name" value="Uridine diphospho-N-Acetylenolpyruvylglucosamine reductase, MurB, C-terminal domain"/>
    <property type="match status" value="1"/>
</dbReference>
<dbReference type="PROSITE" id="PS51387">
    <property type="entry name" value="FAD_PCMH"/>
    <property type="match status" value="1"/>
</dbReference>
<reference key="1">
    <citation type="submission" date="2006-10" db="EMBL/GenBank/DDBJ databases">
        <authorList>
            <person name="Fleischmann R.D."/>
            <person name="Dodson R.J."/>
            <person name="Haft D.H."/>
            <person name="Merkel J.S."/>
            <person name="Nelson W.C."/>
            <person name="Fraser C.M."/>
        </authorList>
    </citation>
    <scope>NUCLEOTIDE SEQUENCE [LARGE SCALE GENOMIC DNA]</scope>
    <source>
        <strain>ATCC 700084 / mc(2)155</strain>
    </source>
</reference>
<reference key="2">
    <citation type="journal article" date="2007" name="Genome Biol.">
        <title>Interrupted coding sequences in Mycobacterium smegmatis: authentic mutations or sequencing errors?</title>
        <authorList>
            <person name="Deshayes C."/>
            <person name="Perrodou E."/>
            <person name="Gallien S."/>
            <person name="Euphrasie D."/>
            <person name="Schaeffer C."/>
            <person name="Van-Dorsselaer A."/>
            <person name="Poch O."/>
            <person name="Lecompte O."/>
            <person name="Reyrat J.-M."/>
        </authorList>
    </citation>
    <scope>NUCLEOTIDE SEQUENCE [LARGE SCALE GENOMIC DNA]</scope>
    <source>
        <strain>ATCC 700084 / mc(2)155</strain>
    </source>
</reference>
<reference key="3">
    <citation type="journal article" date="2009" name="Genome Res.">
        <title>Ortho-proteogenomics: multiple proteomes investigation through orthology and a new MS-based protocol.</title>
        <authorList>
            <person name="Gallien S."/>
            <person name="Perrodou E."/>
            <person name="Carapito C."/>
            <person name="Deshayes C."/>
            <person name="Reyrat J.-M."/>
            <person name="Van Dorsselaer A."/>
            <person name="Poch O."/>
            <person name="Schaeffer C."/>
            <person name="Lecompte O."/>
        </authorList>
    </citation>
    <scope>NUCLEOTIDE SEQUENCE [LARGE SCALE GENOMIC DNA]</scope>
    <source>
        <strain>ATCC 700084 / mc(2)155</strain>
    </source>
</reference>
<protein>
    <recommendedName>
        <fullName evidence="1">UDP-N-acetylenolpyruvoylglucosamine reductase</fullName>
        <ecNumber evidence="1">1.3.1.98</ecNumber>
    </recommendedName>
    <alternativeName>
        <fullName evidence="1">UDP-N-acetylmuramate dehydrogenase</fullName>
    </alternativeName>
</protein>
<evidence type="ECO:0000255" key="1">
    <source>
        <dbReference type="HAMAP-Rule" id="MF_00037"/>
    </source>
</evidence>
<keyword id="KW-0131">Cell cycle</keyword>
<keyword id="KW-0132">Cell division</keyword>
<keyword id="KW-0133">Cell shape</keyword>
<keyword id="KW-0961">Cell wall biogenesis/degradation</keyword>
<keyword id="KW-0963">Cytoplasm</keyword>
<keyword id="KW-0274">FAD</keyword>
<keyword id="KW-0285">Flavoprotein</keyword>
<keyword id="KW-0521">NADP</keyword>
<keyword id="KW-0560">Oxidoreductase</keyword>
<keyword id="KW-0573">Peptidoglycan synthesis</keyword>
<keyword id="KW-1185">Reference proteome</keyword>
<comment type="function">
    <text evidence="1">Cell wall formation.</text>
</comment>
<comment type="catalytic activity">
    <reaction evidence="1">
        <text>UDP-N-acetyl-alpha-D-muramate + NADP(+) = UDP-N-acetyl-3-O-(1-carboxyvinyl)-alpha-D-glucosamine + NADPH + H(+)</text>
        <dbReference type="Rhea" id="RHEA:12248"/>
        <dbReference type="ChEBI" id="CHEBI:15378"/>
        <dbReference type="ChEBI" id="CHEBI:57783"/>
        <dbReference type="ChEBI" id="CHEBI:58349"/>
        <dbReference type="ChEBI" id="CHEBI:68483"/>
        <dbReference type="ChEBI" id="CHEBI:70757"/>
        <dbReference type="EC" id="1.3.1.98"/>
    </reaction>
</comment>
<comment type="cofactor">
    <cofactor evidence="1">
        <name>FAD</name>
        <dbReference type="ChEBI" id="CHEBI:57692"/>
    </cofactor>
</comment>
<comment type="pathway">
    <text evidence="1">Cell wall biogenesis; peptidoglycan biosynthesis.</text>
</comment>
<comment type="subcellular location">
    <subcellularLocation>
        <location evidence="1">Cytoplasm</location>
    </subcellularLocation>
</comment>
<comment type="similarity">
    <text evidence="1">Belongs to the MurB family.</text>
</comment>
<name>MURB_MYCS2</name>
<proteinExistence type="inferred from homology"/>
<accession>A0QQZ3</accession>
<accession>I7G2R1</accession>
<feature type="chain" id="PRO_0000332474" description="UDP-N-acetylenolpyruvoylglucosamine reductase">
    <location>
        <begin position="1"/>
        <end position="363"/>
    </location>
</feature>
<feature type="domain" description="FAD-binding PCMH-type" evidence="1">
    <location>
        <begin position="25"/>
        <end position="201"/>
    </location>
</feature>
<feature type="active site" evidence="1">
    <location>
        <position position="168"/>
    </location>
</feature>
<feature type="active site" description="Proton donor" evidence="1">
    <location>
        <position position="249"/>
    </location>
</feature>
<feature type="active site" evidence="1">
    <location>
        <position position="352"/>
    </location>
</feature>
<organism>
    <name type="scientific">Mycolicibacterium smegmatis (strain ATCC 700084 / mc(2)155)</name>
    <name type="common">Mycobacterium smegmatis</name>
    <dbReference type="NCBI Taxonomy" id="246196"/>
    <lineage>
        <taxon>Bacteria</taxon>
        <taxon>Bacillati</taxon>
        <taxon>Actinomycetota</taxon>
        <taxon>Actinomycetes</taxon>
        <taxon>Mycobacteriales</taxon>
        <taxon>Mycobacteriaceae</taxon>
        <taxon>Mycolicibacterium</taxon>
    </lineage>
</organism>
<sequence length="363" mass="38238">MASSHVAGVEIAEAVPLAPLTTLRIGPVARRMLTCTSTEQLIGVLRALTADDEPLLILAGGSNVVLADDLTDLTVVRIANTEITVDGDRVRAEAGALWDDVVVTSLAHGLGGLECLSGIPGSAGATPVQNVGAYGAEVADTITRVRLLDRRTGEDRWATTEELRFGYRTSVLKHSDAVIVLEVEFGLDAAGRSAPVRYRELATALGVEPGERTDPLRVRDAVLRLRTGKGMVVDPDPDHPDHDTWSVGSFFTNPVVTHADFERVERIARDAGAGPVPNYPAPDGVKLAAGWLVERAGFGKGYPGEGARARLSTKHALALTNRGQATTADVMALAGTVRAGVLDVFGIELTPEPILLGCVLSVP</sequence>